<evidence type="ECO:0000255" key="1">
    <source>
        <dbReference type="HAMAP-Rule" id="MF_00210"/>
    </source>
</evidence>
<dbReference type="EC" id="2.5.1.19" evidence="1"/>
<dbReference type="EMBL" id="AP008226">
    <property type="protein sequence ID" value="BAD70280.1"/>
    <property type="molecule type" value="Genomic_DNA"/>
</dbReference>
<dbReference type="RefSeq" id="WP_011227950.1">
    <property type="nucleotide sequence ID" value="NC_006461.1"/>
</dbReference>
<dbReference type="RefSeq" id="YP_143723.1">
    <property type="nucleotide sequence ID" value="NC_006461.1"/>
</dbReference>
<dbReference type="SMR" id="Q5SL36"/>
<dbReference type="EnsemblBacteria" id="BAD70280">
    <property type="protein sequence ID" value="BAD70280"/>
    <property type="gene ID" value="BAD70280"/>
</dbReference>
<dbReference type="GeneID" id="3168719"/>
<dbReference type="KEGG" id="ttj:TTHA0457"/>
<dbReference type="PATRIC" id="fig|300852.9.peg.456"/>
<dbReference type="eggNOG" id="COG0128">
    <property type="taxonomic scope" value="Bacteria"/>
</dbReference>
<dbReference type="HOGENOM" id="CLU_024321_0_1_0"/>
<dbReference type="PhylomeDB" id="Q5SL36"/>
<dbReference type="UniPathway" id="UPA00053">
    <property type="reaction ID" value="UER00089"/>
</dbReference>
<dbReference type="Proteomes" id="UP000000532">
    <property type="component" value="Chromosome"/>
</dbReference>
<dbReference type="GO" id="GO:0005737">
    <property type="term" value="C:cytoplasm"/>
    <property type="evidence" value="ECO:0007669"/>
    <property type="project" value="UniProtKB-SubCell"/>
</dbReference>
<dbReference type="GO" id="GO:0003866">
    <property type="term" value="F:3-phosphoshikimate 1-carboxyvinyltransferase activity"/>
    <property type="evidence" value="ECO:0007669"/>
    <property type="project" value="UniProtKB-UniRule"/>
</dbReference>
<dbReference type="GO" id="GO:0008652">
    <property type="term" value="P:amino acid biosynthetic process"/>
    <property type="evidence" value="ECO:0007669"/>
    <property type="project" value="UniProtKB-KW"/>
</dbReference>
<dbReference type="GO" id="GO:0009073">
    <property type="term" value="P:aromatic amino acid family biosynthetic process"/>
    <property type="evidence" value="ECO:0007669"/>
    <property type="project" value="UniProtKB-KW"/>
</dbReference>
<dbReference type="GO" id="GO:0009423">
    <property type="term" value="P:chorismate biosynthetic process"/>
    <property type="evidence" value="ECO:0007669"/>
    <property type="project" value="UniProtKB-UniRule"/>
</dbReference>
<dbReference type="CDD" id="cd01556">
    <property type="entry name" value="EPSP_synthase"/>
    <property type="match status" value="1"/>
</dbReference>
<dbReference type="FunFam" id="3.65.10.10:FF:000005">
    <property type="entry name" value="3-phosphoshikimate 1-carboxyvinyltransferase"/>
    <property type="match status" value="1"/>
</dbReference>
<dbReference type="Gene3D" id="3.65.10.10">
    <property type="entry name" value="Enolpyruvate transferase domain"/>
    <property type="match status" value="2"/>
</dbReference>
<dbReference type="HAMAP" id="MF_00210">
    <property type="entry name" value="EPSP_synth"/>
    <property type="match status" value="1"/>
</dbReference>
<dbReference type="InterPro" id="IPR001986">
    <property type="entry name" value="Enolpyruvate_Tfrase_dom"/>
</dbReference>
<dbReference type="InterPro" id="IPR036968">
    <property type="entry name" value="Enolpyruvate_Tfrase_sf"/>
</dbReference>
<dbReference type="InterPro" id="IPR006264">
    <property type="entry name" value="EPSP_synthase"/>
</dbReference>
<dbReference type="InterPro" id="IPR023193">
    <property type="entry name" value="EPSP_synthase_CS"/>
</dbReference>
<dbReference type="InterPro" id="IPR013792">
    <property type="entry name" value="RNA3'P_cycl/enolpyr_Trfase_a/b"/>
</dbReference>
<dbReference type="NCBIfam" id="TIGR01356">
    <property type="entry name" value="aroA"/>
    <property type="match status" value="1"/>
</dbReference>
<dbReference type="PANTHER" id="PTHR21090">
    <property type="entry name" value="AROM/DEHYDROQUINATE SYNTHASE"/>
    <property type="match status" value="1"/>
</dbReference>
<dbReference type="PANTHER" id="PTHR21090:SF5">
    <property type="entry name" value="PENTAFUNCTIONAL AROM POLYPEPTIDE"/>
    <property type="match status" value="1"/>
</dbReference>
<dbReference type="Pfam" id="PF00275">
    <property type="entry name" value="EPSP_synthase"/>
    <property type="match status" value="1"/>
</dbReference>
<dbReference type="PIRSF" id="PIRSF000505">
    <property type="entry name" value="EPSPS"/>
    <property type="match status" value="1"/>
</dbReference>
<dbReference type="SUPFAM" id="SSF55205">
    <property type="entry name" value="EPT/RTPC-like"/>
    <property type="match status" value="1"/>
</dbReference>
<dbReference type="PROSITE" id="PS00885">
    <property type="entry name" value="EPSP_SYNTHASE_2"/>
    <property type="match status" value="1"/>
</dbReference>
<comment type="function">
    <text evidence="1">Catalyzes the transfer of the enolpyruvyl moiety of phosphoenolpyruvate (PEP) to the 5-hydroxyl of shikimate-3-phosphate (S3P) to produce enolpyruvyl shikimate-3-phosphate and inorganic phosphate.</text>
</comment>
<comment type="catalytic activity">
    <reaction evidence="1">
        <text>3-phosphoshikimate + phosphoenolpyruvate = 5-O-(1-carboxyvinyl)-3-phosphoshikimate + phosphate</text>
        <dbReference type="Rhea" id="RHEA:21256"/>
        <dbReference type="ChEBI" id="CHEBI:43474"/>
        <dbReference type="ChEBI" id="CHEBI:57701"/>
        <dbReference type="ChEBI" id="CHEBI:58702"/>
        <dbReference type="ChEBI" id="CHEBI:145989"/>
        <dbReference type="EC" id="2.5.1.19"/>
    </reaction>
    <physiologicalReaction direction="left-to-right" evidence="1">
        <dbReference type="Rhea" id="RHEA:21257"/>
    </physiologicalReaction>
</comment>
<comment type="pathway">
    <text evidence="1">Metabolic intermediate biosynthesis; chorismate biosynthesis; chorismate from D-erythrose 4-phosphate and phosphoenolpyruvate: step 6/7.</text>
</comment>
<comment type="subunit">
    <text evidence="1">Monomer.</text>
</comment>
<comment type="subcellular location">
    <subcellularLocation>
        <location evidence="1">Cytoplasm</location>
    </subcellularLocation>
</comment>
<comment type="similarity">
    <text evidence="1">Belongs to the EPSP synthase family.</text>
</comment>
<protein>
    <recommendedName>
        <fullName evidence="1">3-phosphoshikimate 1-carboxyvinyltransferase</fullName>
        <ecNumber evidence="1">2.5.1.19</ecNumber>
    </recommendedName>
    <alternativeName>
        <fullName evidence="1">5-enolpyruvylshikimate-3-phosphate synthase</fullName>
        <shortName evidence="1">EPSP synthase</shortName>
        <shortName evidence="1">EPSPS</shortName>
    </alternativeName>
</protein>
<organism>
    <name type="scientific">Thermus thermophilus (strain ATCC 27634 / DSM 579 / HB8)</name>
    <dbReference type="NCBI Taxonomy" id="300852"/>
    <lineage>
        <taxon>Bacteria</taxon>
        <taxon>Thermotogati</taxon>
        <taxon>Deinococcota</taxon>
        <taxon>Deinococci</taxon>
        <taxon>Thermales</taxon>
        <taxon>Thermaceae</taxon>
        <taxon>Thermus</taxon>
    </lineage>
</organism>
<sequence length="427" mass="46028">MDAFRLAPCGPLRGRLRVPGDKSVTHRGLMLLALAEGEGRLFYPLKAGDTLSTARVLQALGAEVREEGPHFLVRGRGLRFQEPEDVLDCGNAGTLMRLLLGLLAGQEGLFAVLTGDASLRRRPMGRVVAPLRAMGARVDGREEGERAPLAVRGAPLRGLRYTLPVPSAQVKSALLLAGLFAEGVTEVEEPTPTRDHTERLFRHFGLPLEVEGRKVRTWRTGPFPAKDLVVPGDFSSAAFFLVAALVTPGSEVVVEGVGLNPTRTGLLTVLKAMGADLEWQVLEGEAGEPVGWVRARHSLLKGVAVDPGLIPLMVDEVPVLAAAAAWAEGETYIPGLSELRVKESDRVRAIAENLRALGVEVEEGPDWLRIRGGGVRPGRVRPFHDHRIAMAFAVAGLPVGVEVEEPHWAEISYPGFFQDLLRLCAAS</sequence>
<keyword id="KW-0028">Amino-acid biosynthesis</keyword>
<keyword id="KW-0057">Aromatic amino acid biosynthesis</keyword>
<keyword id="KW-0963">Cytoplasm</keyword>
<keyword id="KW-1185">Reference proteome</keyword>
<keyword id="KW-0808">Transferase</keyword>
<reference key="1">
    <citation type="submission" date="2004-11" db="EMBL/GenBank/DDBJ databases">
        <title>Complete genome sequence of Thermus thermophilus HB8.</title>
        <authorList>
            <person name="Masui R."/>
            <person name="Kurokawa K."/>
            <person name="Nakagawa N."/>
            <person name="Tokunaga F."/>
            <person name="Koyama Y."/>
            <person name="Shibata T."/>
            <person name="Oshima T."/>
            <person name="Yokoyama S."/>
            <person name="Yasunaga T."/>
            <person name="Kuramitsu S."/>
        </authorList>
    </citation>
    <scope>NUCLEOTIDE SEQUENCE [LARGE SCALE GENOMIC DNA]</scope>
    <source>
        <strain>ATCC 27634 / DSM 579 / HB8</strain>
    </source>
</reference>
<name>AROA_THET8</name>
<feature type="chain" id="PRO_0000325397" description="3-phosphoshikimate 1-carboxyvinyltransferase">
    <location>
        <begin position="1"/>
        <end position="427"/>
    </location>
</feature>
<feature type="active site" description="Proton acceptor" evidence="1">
    <location>
        <position position="315"/>
    </location>
</feature>
<feature type="binding site" evidence="1">
    <location>
        <position position="22"/>
    </location>
    <ligand>
        <name>3-phosphoshikimate</name>
        <dbReference type="ChEBI" id="CHEBI:145989"/>
    </ligand>
</feature>
<feature type="binding site" evidence="1">
    <location>
        <position position="22"/>
    </location>
    <ligand>
        <name>phosphoenolpyruvate</name>
        <dbReference type="ChEBI" id="CHEBI:58702"/>
    </ligand>
</feature>
<feature type="binding site" evidence="1">
    <location>
        <position position="23"/>
    </location>
    <ligand>
        <name>3-phosphoshikimate</name>
        <dbReference type="ChEBI" id="CHEBI:145989"/>
    </ligand>
</feature>
<feature type="binding site" evidence="1">
    <location>
        <position position="27"/>
    </location>
    <ligand>
        <name>3-phosphoshikimate</name>
        <dbReference type="ChEBI" id="CHEBI:145989"/>
    </ligand>
</feature>
<feature type="binding site" evidence="1">
    <location>
        <position position="93"/>
    </location>
    <ligand>
        <name>phosphoenolpyruvate</name>
        <dbReference type="ChEBI" id="CHEBI:58702"/>
    </ligand>
</feature>
<feature type="binding site" evidence="1">
    <location>
        <position position="122"/>
    </location>
    <ligand>
        <name>phosphoenolpyruvate</name>
        <dbReference type="ChEBI" id="CHEBI:58702"/>
    </ligand>
</feature>
<feature type="binding site" evidence="1">
    <location>
        <position position="167"/>
    </location>
    <ligand>
        <name>3-phosphoshikimate</name>
        <dbReference type="ChEBI" id="CHEBI:145989"/>
    </ligand>
</feature>
<feature type="binding site" evidence="1">
    <location>
        <position position="169"/>
    </location>
    <ligand>
        <name>3-phosphoshikimate</name>
        <dbReference type="ChEBI" id="CHEBI:145989"/>
    </ligand>
</feature>
<feature type="binding site" evidence="1">
    <location>
        <position position="169"/>
    </location>
    <ligand>
        <name>phosphoenolpyruvate</name>
        <dbReference type="ChEBI" id="CHEBI:58702"/>
    </ligand>
</feature>
<feature type="binding site" evidence="1">
    <location>
        <position position="315"/>
    </location>
    <ligand>
        <name>3-phosphoshikimate</name>
        <dbReference type="ChEBI" id="CHEBI:145989"/>
    </ligand>
</feature>
<feature type="binding site" evidence="1">
    <location>
        <position position="342"/>
    </location>
    <ligand>
        <name>3-phosphoshikimate</name>
        <dbReference type="ChEBI" id="CHEBI:145989"/>
    </ligand>
</feature>
<feature type="binding site" evidence="1">
    <location>
        <position position="346"/>
    </location>
    <ligand>
        <name>phosphoenolpyruvate</name>
        <dbReference type="ChEBI" id="CHEBI:58702"/>
    </ligand>
</feature>
<feature type="binding site" evidence="1">
    <location>
        <position position="387"/>
    </location>
    <ligand>
        <name>phosphoenolpyruvate</name>
        <dbReference type="ChEBI" id="CHEBI:58702"/>
    </ligand>
</feature>
<gene>
    <name evidence="1" type="primary">aroA</name>
    <name type="ordered locus">TTHA0457</name>
</gene>
<accession>Q5SL36</accession>
<proteinExistence type="inferred from homology"/>